<organism>
    <name type="scientific">Rice dwarf virus (isolate Akita)</name>
    <name type="common">RDV</name>
    <dbReference type="NCBI Taxonomy" id="142803"/>
    <lineage>
        <taxon>Viruses</taxon>
        <taxon>Riboviria</taxon>
        <taxon>Orthornavirae</taxon>
        <taxon>Duplornaviricota</taxon>
        <taxon>Resentoviricetes</taxon>
        <taxon>Reovirales</taxon>
        <taxon>Sedoreoviridae</taxon>
        <taxon>Phytoreovirus</taxon>
        <taxon>Rice dwarf virus</taxon>
    </lineage>
</organism>
<organismHost>
    <name type="scientific">Alopecurus aequalis</name>
    <dbReference type="NCBI Taxonomy" id="114194"/>
</organismHost>
<organismHost>
    <name type="scientific">Echinochloa crus-galli</name>
    <name type="common">Barnyard grass</name>
    <name type="synonym">Panicum crus-galli</name>
    <dbReference type="NCBI Taxonomy" id="90397"/>
</organismHost>
<organismHost>
    <name type="scientific">Nephotettix cincticeps</name>
    <name type="common">Green rice leafhopper</name>
    <name type="synonym">Selenocephalus cincticeps</name>
    <dbReference type="NCBI Taxonomy" id="94400"/>
</organismHost>
<organismHost>
    <name type="scientific">Oryza sativa</name>
    <name type="common">Rice</name>
    <dbReference type="NCBI Taxonomy" id="4530"/>
</organismHost>
<organismHost>
    <name type="scientific">Paspalum</name>
    <dbReference type="NCBI Taxonomy" id="147271"/>
</organismHost>
<reference key="1">
    <citation type="journal article" date="1993" name="Arch. Virol.">
        <title>In vitro translation of rice dwarf phytoreovirus genome segments S4 to S10.</title>
        <authorList>
            <person name="Suzuki N."/>
        </authorList>
    </citation>
    <scope>NUCLEOTIDE SEQUENCE [MRNA]</scope>
</reference>
<proteinExistence type="evidence at transcript level"/>
<dbReference type="EMBL" id="D10220">
    <property type="protein sequence ID" value="BAA01072.1"/>
    <property type="molecule type" value="mRNA"/>
</dbReference>
<dbReference type="SMR" id="Q85450"/>
<dbReference type="GO" id="GO:0030430">
    <property type="term" value="C:host cell cytoplasm"/>
    <property type="evidence" value="ECO:0007669"/>
    <property type="project" value="UniProtKB-SubCell"/>
</dbReference>
<dbReference type="GO" id="GO:0039624">
    <property type="term" value="C:viral outer capsid"/>
    <property type="evidence" value="ECO:0007669"/>
    <property type="project" value="UniProtKB-KW"/>
</dbReference>
<dbReference type="InterPro" id="IPR008776">
    <property type="entry name" value="Phyto_Pns9_10"/>
</dbReference>
<dbReference type="Pfam" id="PF05878">
    <property type="entry name" value="Phyto_Pns9_10"/>
    <property type="match status" value="1"/>
</dbReference>
<feature type="chain" id="PRO_0000222793" description="Minor outer capsid protein P9">
    <location>
        <begin position="1"/>
        <end position="351"/>
    </location>
</feature>
<feature type="region of interest" description="Disordered" evidence="2">
    <location>
        <begin position="245"/>
        <end position="310"/>
    </location>
</feature>
<feature type="compositionally biased region" description="Basic and acidic residues" evidence="2">
    <location>
        <begin position="285"/>
        <end position="297"/>
    </location>
</feature>
<keyword id="KW-0167">Capsid protein</keyword>
<keyword id="KW-1035">Host cytoplasm</keyword>
<keyword id="KW-1152">Outer capsid protein</keyword>
<keyword id="KW-0946">Virion</keyword>
<evidence type="ECO:0000250" key="1"/>
<evidence type="ECO:0000256" key="2">
    <source>
        <dbReference type="SAM" id="MobiDB-lite"/>
    </source>
</evidence>
<evidence type="ECO:0000305" key="3"/>
<accession>Q85450</accession>
<protein>
    <recommendedName>
        <fullName>Minor outer capsid protein P9</fullName>
    </recommendedName>
</protein>
<comment type="function">
    <text evidence="1">Minor outer capsid protein.</text>
</comment>
<comment type="subcellular location">
    <subcellularLocation>
        <location evidence="3">Virion</location>
    </subcellularLocation>
    <subcellularLocation>
        <location evidence="1">Host cytoplasm</location>
    </subcellularLocation>
    <text evidence="1">Found in the peripheral regions of spherical cytoplasmic structures, called virus factories, that appear early after infection and are the site of viral replication and packaging.</text>
</comment>
<comment type="similarity">
    <text evidence="3">Belongs to the phytoreovirus minor outer capsid protein P9 family.</text>
</comment>
<sequence>MGKLQDGIAIKRINDAITTFKNYKLGELEQGGSMAINTLSNVRAHVGLAWPAILRNCLIHTSSHLGFMKFMIDIATTWKVGAFTLLGSVGDEDPFTDVDLIYTKTCLHLGLKDNDFLQFPEEFAYEANSFLEAQSMNARVDMLTGVHNIEDKYVFRMQSISKFLKAYYTASEDVAYLTGFIKPDDSKDSILSAELLKAQVTSEVLRVRNLITTKIQKYINLYEDSQLPHFRQAALSYTQDWDVDGGVPAALPQPDTTDDENPVANPGPSAPTVSKGADQPEDEEMIRKKVETSKDGPPKAVPSGNVSARGFPAFLEDDMSEMDAPDGFHDYLTREHENNFDLTQLGLAPSV</sequence>
<name>P9_RDVA</name>